<evidence type="ECO:0000255" key="1">
    <source>
        <dbReference type="HAMAP-Rule" id="MF_00218"/>
    </source>
</evidence>
<proteinExistence type="inferred from homology"/>
<reference key="1">
    <citation type="journal article" date="2009" name="PLoS Pathog.">
        <title>Molecular evolutionary consequences of niche restriction in Francisella tularensis, a facultative intracellular pathogen.</title>
        <authorList>
            <person name="Larsson P."/>
            <person name="Elfsmark D."/>
            <person name="Svensson K."/>
            <person name="Wikstroem P."/>
            <person name="Forsman M."/>
            <person name="Brettin T."/>
            <person name="Keim P."/>
            <person name="Johansson A."/>
        </authorList>
    </citation>
    <scope>NUCLEOTIDE SEQUENCE [LARGE SCALE GENOMIC DNA]</scope>
    <source>
        <strain>FSC147</strain>
    </source>
</reference>
<name>DCUP_FRATM</name>
<keyword id="KW-0963">Cytoplasm</keyword>
<keyword id="KW-0210">Decarboxylase</keyword>
<keyword id="KW-0456">Lyase</keyword>
<keyword id="KW-0627">Porphyrin biosynthesis</keyword>
<gene>
    <name evidence="1" type="primary">hemE</name>
    <name type="ordered locus">FTM_0110</name>
</gene>
<dbReference type="EC" id="4.1.1.37" evidence="1"/>
<dbReference type="EMBL" id="CP000915">
    <property type="protein sequence ID" value="ACD30209.1"/>
    <property type="molecule type" value="Genomic_DNA"/>
</dbReference>
<dbReference type="SMR" id="B2SEW4"/>
<dbReference type="KEGG" id="ftm:FTM_0110"/>
<dbReference type="HOGENOM" id="CLU_040933_0_0_6"/>
<dbReference type="UniPathway" id="UPA00251">
    <property type="reaction ID" value="UER00321"/>
</dbReference>
<dbReference type="GO" id="GO:0005829">
    <property type="term" value="C:cytosol"/>
    <property type="evidence" value="ECO:0007669"/>
    <property type="project" value="TreeGrafter"/>
</dbReference>
<dbReference type="GO" id="GO:0004853">
    <property type="term" value="F:uroporphyrinogen decarboxylase activity"/>
    <property type="evidence" value="ECO:0007669"/>
    <property type="project" value="UniProtKB-UniRule"/>
</dbReference>
<dbReference type="GO" id="GO:0006782">
    <property type="term" value="P:protoporphyrinogen IX biosynthetic process"/>
    <property type="evidence" value="ECO:0007669"/>
    <property type="project" value="UniProtKB-UniRule"/>
</dbReference>
<dbReference type="CDD" id="cd00717">
    <property type="entry name" value="URO-D"/>
    <property type="match status" value="1"/>
</dbReference>
<dbReference type="FunFam" id="3.20.20.210:FF:000008">
    <property type="entry name" value="Uroporphyrinogen decarboxylase"/>
    <property type="match status" value="1"/>
</dbReference>
<dbReference type="Gene3D" id="3.20.20.210">
    <property type="match status" value="1"/>
</dbReference>
<dbReference type="HAMAP" id="MF_00218">
    <property type="entry name" value="URO_D"/>
    <property type="match status" value="1"/>
</dbReference>
<dbReference type="InterPro" id="IPR038071">
    <property type="entry name" value="UROD/MetE-like_sf"/>
</dbReference>
<dbReference type="InterPro" id="IPR006361">
    <property type="entry name" value="Uroporphyrinogen_deCO2ase_HemE"/>
</dbReference>
<dbReference type="InterPro" id="IPR000257">
    <property type="entry name" value="Uroporphyrinogen_deCOase"/>
</dbReference>
<dbReference type="NCBIfam" id="TIGR01464">
    <property type="entry name" value="hemE"/>
    <property type="match status" value="1"/>
</dbReference>
<dbReference type="PANTHER" id="PTHR21091">
    <property type="entry name" value="METHYLTETRAHYDROFOLATE:HOMOCYSTEINE METHYLTRANSFERASE RELATED"/>
    <property type="match status" value="1"/>
</dbReference>
<dbReference type="PANTHER" id="PTHR21091:SF169">
    <property type="entry name" value="UROPORPHYRINOGEN DECARBOXYLASE"/>
    <property type="match status" value="1"/>
</dbReference>
<dbReference type="Pfam" id="PF01208">
    <property type="entry name" value="URO-D"/>
    <property type="match status" value="1"/>
</dbReference>
<dbReference type="SUPFAM" id="SSF51726">
    <property type="entry name" value="UROD/MetE-like"/>
    <property type="match status" value="1"/>
</dbReference>
<dbReference type="PROSITE" id="PS00906">
    <property type="entry name" value="UROD_1"/>
    <property type="match status" value="1"/>
</dbReference>
<dbReference type="PROSITE" id="PS00907">
    <property type="entry name" value="UROD_2"/>
    <property type="match status" value="1"/>
</dbReference>
<accession>B2SEW4</accession>
<protein>
    <recommendedName>
        <fullName evidence="1">Uroporphyrinogen decarboxylase</fullName>
        <shortName evidence="1">UPD</shortName>
        <shortName evidence="1">URO-D</shortName>
        <ecNumber evidence="1">4.1.1.37</ecNumber>
    </recommendedName>
</protein>
<organism>
    <name type="scientific">Francisella tularensis subsp. mediasiatica (strain FSC147)</name>
    <dbReference type="NCBI Taxonomy" id="441952"/>
    <lineage>
        <taxon>Bacteria</taxon>
        <taxon>Pseudomonadati</taxon>
        <taxon>Pseudomonadota</taxon>
        <taxon>Gammaproteobacteria</taxon>
        <taxon>Thiotrichales</taxon>
        <taxon>Francisellaceae</taxon>
        <taxon>Francisella</taxon>
    </lineage>
</organism>
<sequence length="344" mass="38872">MRKLFLDAFGEKKLDKPPVWIMRQAGRYLPEYRAVRAKFDNFMDMCRNADACCEVALHPLQRYDLDAAIVFSDILTIPEAMGMDLKFIKGTGPVFSEPIQSQKDLDKLKSIEDSIGSLDYVYNAVKTTSSAINVPLIGFTGSPWTLAAYMIEGSGSKQFNKLRKMMYANPQLMHSLLQRLADITIIYLLEQVKAGASSVMIFDTWGGILPLEHYKNFSLKYKEYIAKNVKQKINIPIVFFTKGGSNFFEEIKDKSCDGVGVDWSVTLKQARHRIGVGKVLQGNFDPAFLYGSKQSIRETVRANIEFIQSDKLNNYIVNLGHGIYPDIDPDSVRVMIDAIREFSA</sequence>
<feature type="chain" id="PRO_1000099993" description="Uroporphyrinogen decarboxylase">
    <location>
        <begin position="1"/>
        <end position="344"/>
    </location>
</feature>
<feature type="binding site" evidence="1">
    <location>
        <begin position="23"/>
        <end position="27"/>
    </location>
    <ligand>
        <name>substrate</name>
    </ligand>
</feature>
<feature type="binding site" evidence="1">
    <location>
        <position position="73"/>
    </location>
    <ligand>
        <name>substrate</name>
    </ligand>
</feature>
<feature type="binding site" evidence="1">
    <location>
        <position position="149"/>
    </location>
    <ligand>
        <name>substrate</name>
    </ligand>
</feature>
<feature type="binding site" evidence="1">
    <location>
        <position position="204"/>
    </location>
    <ligand>
        <name>substrate</name>
    </ligand>
</feature>
<feature type="binding site" evidence="1">
    <location>
        <position position="321"/>
    </location>
    <ligand>
        <name>substrate</name>
    </ligand>
</feature>
<feature type="site" description="Transition state stabilizer" evidence="1">
    <location>
        <position position="73"/>
    </location>
</feature>
<comment type="function">
    <text evidence="1">Catalyzes the decarboxylation of four acetate groups of uroporphyrinogen-III to yield coproporphyrinogen-III.</text>
</comment>
<comment type="catalytic activity">
    <reaction evidence="1">
        <text>uroporphyrinogen III + 4 H(+) = coproporphyrinogen III + 4 CO2</text>
        <dbReference type="Rhea" id="RHEA:19865"/>
        <dbReference type="ChEBI" id="CHEBI:15378"/>
        <dbReference type="ChEBI" id="CHEBI:16526"/>
        <dbReference type="ChEBI" id="CHEBI:57308"/>
        <dbReference type="ChEBI" id="CHEBI:57309"/>
        <dbReference type="EC" id="4.1.1.37"/>
    </reaction>
</comment>
<comment type="pathway">
    <text evidence="1">Porphyrin-containing compound metabolism; protoporphyrin-IX biosynthesis; coproporphyrinogen-III from 5-aminolevulinate: step 4/4.</text>
</comment>
<comment type="subunit">
    <text evidence="1">Homodimer.</text>
</comment>
<comment type="subcellular location">
    <subcellularLocation>
        <location evidence="1">Cytoplasm</location>
    </subcellularLocation>
</comment>
<comment type="similarity">
    <text evidence="1">Belongs to the uroporphyrinogen decarboxylase family.</text>
</comment>